<reference key="1">
    <citation type="journal article" date="2001" name="DNA Res.">
        <title>Complete genomic sequence of the filamentous nitrogen-fixing cyanobacterium Anabaena sp. strain PCC 7120.</title>
        <authorList>
            <person name="Kaneko T."/>
            <person name="Nakamura Y."/>
            <person name="Wolk C.P."/>
            <person name="Kuritz T."/>
            <person name="Sasamoto S."/>
            <person name="Watanabe A."/>
            <person name="Iriguchi M."/>
            <person name="Ishikawa A."/>
            <person name="Kawashima K."/>
            <person name="Kimura T."/>
            <person name="Kishida Y."/>
            <person name="Kohara M."/>
            <person name="Matsumoto M."/>
            <person name="Matsuno A."/>
            <person name="Muraki A."/>
            <person name="Nakazaki N."/>
            <person name="Shimpo S."/>
            <person name="Sugimoto M."/>
            <person name="Takazawa M."/>
            <person name="Yamada M."/>
            <person name="Yasuda M."/>
            <person name="Tabata S."/>
        </authorList>
    </citation>
    <scope>NUCLEOTIDE SEQUENCE [LARGE SCALE GENOMIC DNA]</scope>
    <source>
        <strain>PCC 7120 / SAG 25.82 / UTEX 2576</strain>
    </source>
</reference>
<reference key="2">
    <citation type="journal article" date="2007" name="J. Biol. Chem.">
        <title>Lyase activities of CpcS- and CpcT-like proteins from Nostoc PCC7120 and sequential reconstitution of binding sites of phycoerythrocyanin and phycocyanin beta-subunits.</title>
        <authorList>
            <person name="Zhao K.H."/>
            <person name="Zhang J."/>
            <person name="Tu J.M."/>
            <person name="Bohm S."/>
            <person name="Ploscher M."/>
            <person name="Eichacker L."/>
            <person name="Bubenzer C."/>
            <person name="Scheer H."/>
            <person name="Wang X."/>
            <person name="Zhou M."/>
        </authorList>
    </citation>
    <scope>INDUCTION</scope>
    <scope>FUNCTION</scope>
    <scope>LACK OF CHROMOPHORE LYASE ACTIVITY IN VITRO</scope>
    <source>
        <strain>PCC 7120 / SAG 25.82 / UTEX 2576</strain>
    </source>
</reference>
<reference key="3">
    <citation type="journal article" date="2007" name="Proc. Natl. Acad. Sci. U.S.A.">
        <title>Phycobilin:cystein-84 biliprotein lyase, a near-universal lyase for cysteine-84-binding sites in cyanobacterial phycobiliproteins.</title>
        <authorList>
            <person name="Zhao K.H."/>
            <person name="Su P."/>
            <person name="Tu J.M."/>
            <person name="Wang X."/>
            <person name="Liu H."/>
            <person name="Ploscher M."/>
            <person name="Eichacker L."/>
            <person name="Yang B."/>
            <person name="Zhou M."/>
            <person name="Scheer H."/>
        </authorList>
    </citation>
    <scope>FUNCTION</scope>
    <scope>LACK OF CHROMOPHORE LYASE ACTIVITY IN VITRO</scope>
    <source>
        <strain>PCC 7120 / SAG 25.82 / UTEX 2576</strain>
    </source>
</reference>
<evidence type="ECO:0000269" key="1">
    <source>
    </source>
</evidence>
<evidence type="ECO:0000269" key="2">
    <source>
    </source>
</evidence>
<evidence type="ECO:0000305" key="3"/>
<sequence length="180" mass="20661">MKSLSKLVRTVDESQIIEFFQESVGEWCSQRRYYTLPDGETKEMMSMITIRFLEQGCDELQKLAQIHKLAESVFLICGAEVTWCSTDVLKNRSESEGSTLFGALGNILYRDRGFATSKPVTAQYNFPNPKTLCLRTEYNGSVFEEELKLIGSKYRTRQTIISRAGEQLMIGQYIEKRIVQ</sequence>
<gene>
    <name type="primary">cpeS2</name>
    <name type="ordered locus">all5292</name>
</gene>
<proteinExistence type="evidence at transcript level"/>
<accession>Q8YLK6</accession>
<keyword id="KW-0456">Lyase</keyword>
<keyword id="KW-1185">Reference proteome</keyword>
<dbReference type="EC" id="4.-.-.-"/>
<dbReference type="EMBL" id="BA000019">
    <property type="protein sequence ID" value="BAB76991.1"/>
    <property type="molecule type" value="Genomic_DNA"/>
</dbReference>
<dbReference type="PIR" id="AD2467">
    <property type="entry name" value="AD2467"/>
</dbReference>
<dbReference type="RefSeq" id="WP_010999416.1">
    <property type="nucleotide sequence ID" value="NZ_RSCN01000005.1"/>
</dbReference>
<dbReference type="SMR" id="Q8YLK6"/>
<dbReference type="STRING" id="103690.gene:10497352"/>
<dbReference type="KEGG" id="ana:all5292"/>
<dbReference type="eggNOG" id="ENOG5030ATU">
    <property type="taxonomic scope" value="Bacteria"/>
</dbReference>
<dbReference type="OrthoDB" id="484684at2"/>
<dbReference type="Proteomes" id="UP000002483">
    <property type="component" value="Chromosome"/>
</dbReference>
<dbReference type="GO" id="GO:0016829">
    <property type="term" value="F:lyase activity"/>
    <property type="evidence" value="ECO:0007669"/>
    <property type="project" value="UniProtKB-KW"/>
</dbReference>
<dbReference type="CDD" id="cd19433">
    <property type="entry name" value="lipocalin_CpcS-CpeS"/>
    <property type="match status" value="1"/>
</dbReference>
<dbReference type="Gene3D" id="2.40.128.20">
    <property type="match status" value="1"/>
</dbReference>
<dbReference type="HAMAP" id="MF_01459">
    <property type="entry name" value="Chrphore_lyase_CpxS"/>
    <property type="match status" value="1"/>
</dbReference>
<dbReference type="InterPro" id="IPR012674">
    <property type="entry name" value="Calycin"/>
</dbReference>
<dbReference type="InterPro" id="IPR018536">
    <property type="entry name" value="CpcS/CpeS"/>
</dbReference>
<dbReference type="Pfam" id="PF09367">
    <property type="entry name" value="CpeS"/>
    <property type="match status" value="1"/>
</dbReference>
<feature type="chain" id="PRO_0000403137" description="Putative phycocyanobilin lyase CpcS 2">
    <location>
        <begin position="1"/>
        <end position="180"/>
    </location>
</feature>
<name>CPCS2_NOSS1</name>
<protein>
    <recommendedName>
        <fullName>Putative phycocyanobilin lyase CpcS 2</fullName>
        <ecNumber>4.-.-.-</ecNumber>
    </recommendedName>
</protein>
<comment type="function">
    <text evidence="1 2 3">Covalently attaches a chromophore to Cys residue(s) of phycobiliproteins (Potential). In vitro does not act as a chromophore lyase for ApcA1, ApcA2, ApcB, ApcD, ApcF, CpcB or PecB, the lyase activity is therefore unsure.</text>
</comment>
<comment type="induction">
    <text evidence="2">Induced by nitrogen starvation.</text>
</comment>
<comment type="similarity">
    <text evidence="3">Belongs to the CpcS/CpeS biliprotein lyase family.</text>
</comment>
<organism>
    <name type="scientific">Nostoc sp. (strain PCC 7120 / SAG 25.82 / UTEX 2576)</name>
    <dbReference type="NCBI Taxonomy" id="103690"/>
    <lineage>
        <taxon>Bacteria</taxon>
        <taxon>Bacillati</taxon>
        <taxon>Cyanobacteriota</taxon>
        <taxon>Cyanophyceae</taxon>
        <taxon>Nostocales</taxon>
        <taxon>Nostocaceae</taxon>
        <taxon>Nostoc</taxon>
    </lineage>
</organism>